<organism>
    <name type="scientific">Saccharomyces cerevisiae (strain ATCC 204508 / S288c)</name>
    <name type="common">Baker's yeast</name>
    <dbReference type="NCBI Taxonomy" id="559292"/>
    <lineage>
        <taxon>Eukaryota</taxon>
        <taxon>Fungi</taxon>
        <taxon>Dikarya</taxon>
        <taxon>Ascomycota</taxon>
        <taxon>Saccharomycotina</taxon>
        <taxon>Saccharomycetes</taxon>
        <taxon>Saccharomycetales</taxon>
        <taxon>Saccharomycetaceae</taxon>
        <taxon>Saccharomyces</taxon>
    </lineage>
</organism>
<proteinExistence type="evidence at protein level"/>
<gene>
    <name evidence="12" type="primary">SNT2</name>
    <name evidence="16" type="ordered locus">YGL131C</name>
    <name type="ORF">G2850</name>
</gene>
<comment type="function">
    <text evidence="10 11">Transcriptional regulator that, together with ECM5, recruits histone deacetylase RPD3 to a small number of promoters of stress-response genes in response to oxidative stress (PubMed:23878396). Probable ubiquitin-protein ligase involved in the degradation-related ubiquitination of histones. Contributes to the post-translational regulation of histone protein levels by polyubiquitination of excess histones for subsequent degradation (PubMed:22570702).</text>
</comment>
<comment type="catalytic activity">
    <reaction evidence="10">
        <text>S-ubiquitinyl-[E2 ubiquitin-conjugating enzyme]-L-cysteine + [acceptor protein]-L-lysine = [E2 ubiquitin-conjugating enzyme]-L-cysteine + N(6)-ubiquitinyl-[acceptor protein]-L-lysine.</text>
        <dbReference type="EC" id="2.3.2.27"/>
    </reaction>
</comment>
<comment type="subunit">
    <text evidence="8 9 10 11">Component of the Snt2C complex composed of SNT2, ECM5 and RPD3. Interacts with the E2 ubiquitin-conjugating enzyme UBC4 and histones H3 and H4. Binding is enhanced to methylated histone H3K36me3.</text>
</comment>
<comment type="interaction">
    <interactant intactId="EBI-23958">
        <id>P53127</id>
    </interactant>
    <interactant intactId="EBI-27382">
        <id>Q03214</id>
        <label>ECM5</label>
    </interactant>
    <organismsDiffer>false</organismsDiffer>
    <experiments>5</experiments>
</comment>
<comment type="subcellular location">
    <subcellularLocation>
        <location evidence="7">Cytoplasm</location>
    </subcellularLocation>
    <subcellularLocation>
        <location evidence="7">Nucleus</location>
    </subcellularLocation>
    <text evidence="11">Localizes to promoters of stress-response genes in response to oxidative stress.</text>
</comment>
<sequence length="1403" mass="163203">MPKEEDFQLPRRREAAKNVNYNEMEIDTKLVQQIQIAEKSGAKTKGSNSQTPRNCKRTSNPASRNEKFKYQKFLHDKNTCWNFIPTLPPSFRKNSRFSNILDLDDAMIDLKKMSLFNTESVLLSANDTIYMISEPAGEPYYVGRVVNFVSKPEFSNTIHEAIKTTSVFPAKFFQVRMNWFYRPRDIQEHVNTFNPRLVYASLHQDICPISSYRGKCSIFHKDEVFDVLPNEKECIIRPNIFYFDELFDRYTLKYYKVYSTDKILNKWNSKSPFLYVLNRRFRYIYTEPKYPLENVLKKYVFHELEVNELSPADYQWDKRCQFCKEWCIQKESLSCDECGVCAHLYCMDPPLDRKPNKDVVWTCFSCLQKQQGTKDSHVRFLEEQALELDFIRSVRQKIEEISSKAIKENVGYNTENCWFQYLGIYSISHIGDALNDSMFFPYPFKPSRVGVKYQWNGCNHNVPWRRNSYISANSEEERGSTKTSELAWVLDASKITTRKLSEYIEQCKSEICPILNVRGETCNFIDVVLKNLLFTNYDTAEAFKKCKRELSRKFLKEPSFTAVEIRKFEEAVEKFGSELRPVCEYVGTQPMSMIVRFYYNWKKTERGLTVRGKLSKLSKNKRKKEIANHENDVETKYIDDSSFDTEKLSLAESSFQCMFCKTDYSPMWYRVTGGSDDEKIKIRMQTGVNEKTEISEKSPAHSKKNEKLGALCIRCARMWRRYAIKWVPPLETLRKITGTCQNSFYSAIEGIIEENNTNKFTLSPFQAHNKLLEWELVQDSELIIRQRMKVYKNPNSFVKMKRYSMTFHTQLYKMAVRSYRKNEFHPETMQRDLELFIEDNKEVRKAIPEQKPERAKNTKDEFPVNIIRQSPGTIKTSDTSRNRKCNDVFIEKASNNNIPKITNASNDLIEISIKTGGSSSGSVSVDKGFKFVKFDNKTFQRLRNSLKLVNNKLPKYNEPSTKKIKMINDIALSNPLNEPNGASYNYTVISHSKETSVALEKYHDGNKPSKMLEKDMILKHTKNKPKNPDTAWANNSARTFCSVCKEKFNDNDNYEVVCGNCGLTVHYFCYAIKLPKDMKKNTNLKTFKWLCDPCSNDLNPIISTTYQCSMCPTKDYDYDRYRSQSFKICPDALKCTSLGTWVHLVCSLFNEDIKYGNGQSMQPALNTTAVLIKHSRFTCGVCRINGGGLVKCNKCQYRYHITCAQNSSNFKLMFEKKNMSVDTTLPCIKDVKLNDTYTLRPILICDRHDISLEGNELYPLSYKPQHTLSYIEQYCRYYKCESDHSLVELRYFEQLRLRHGEMPGNSHDSAIKPKIYVLPFERTCPHCGTNKSLYWYEDIICHSCNLRSGAQELDFDSASANISNDNGLPVEITQQLMEGIEPAMFDIDISEAGTDKNTHPSSQ</sequence>
<dbReference type="EC" id="2.3.2.27" evidence="10"/>
<dbReference type="EMBL" id="Z72654">
    <property type="protein sequence ID" value="CAA96843.1"/>
    <property type="molecule type" value="Genomic_DNA"/>
</dbReference>
<dbReference type="EMBL" id="Z72652">
    <property type="protein sequence ID" value="CAA96841.1"/>
    <property type="molecule type" value="Genomic_DNA"/>
</dbReference>
<dbReference type="EMBL" id="BK006941">
    <property type="protein sequence ID" value="DAA07978.1"/>
    <property type="molecule type" value="Genomic_DNA"/>
</dbReference>
<dbReference type="PIR" id="S64142">
    <property type="entry name" value="S64142"/>
</dbReference>
<dbReference type="RefSeq" id="NP_011384.1">
    <property type="nucleotide sequence ID" value="NM_001180996.1"/>
</dbReference>
<dbReference type="BioGRID" id="33120">
    <property type="interactions" value="55"/>
</dbReference>
<dbReference type="ComplexPortal" id="CPX-1372">
    <property type="entry name" value="SNT2C histone deacetylase complex"/>
</dbReference>
<dbReference type="DIP" id="DIP-6540N"/>
<dbReference type="FunCoup" id="P53127">
    <property type="interactions" value="83"/>
</dbReference>
<dbReference type="IntAct" id="P53127">
    <property type="interactions" value="17"/>
</dbReference>
<dbReference type="MINT" id="P53127"/>
<dbReference type="STRING" id="4932.YGL131C"/>
<dbReference type="iPTMnet" id="P53127"/>
<dbReference type="PaxDb" id="4932-YGL131C"/>
<dbReference type="PeptideAtlas" id="P53127"/>
<dbReference type="EnsemblFungi" id="YGL131C_mRNA">
    <property type="protein sequence ID" value="YGL131C"/>
    <property type="gene ID" value="YGL131C"/>
</dbReference>
<dbReference type="GeneID" id="852746"/>
<dbReference type="KEGG" id="sce:YGL131C"/>
<dbReference type="AGR" id="SGD:S000003099"/>
<dbReference type="SGD" id="S000003099">
    <property type="gene designation" value="SNT2"/>
</dbReference>
<dbReference type="VEuPathDB" id="FungiDB:YGL131C"/>
<dbReference type="eggNOG" id="KOG0955">
    <property type="taxonomic scope" value="Eukaryota"/>
</dbReference>
<dbReference type="HOGENOM" id="CLU_001514_2_0_1"/>
<dbReference type="InParanoid" id="P53127"/>
<dbReference type="OMA" id="WVMDEPP"/>
<dbReference type="OrthoDB" id="336088at2759"/>
<dbReference type="BioCyc" id="YEAST:G3O-30627-MONOMER"/>
<dbReference type="BioGRID-ORCS" id="852746">
    <property type="hits" value="1 hit in 10 CRISPR screens"/>
</dbReference>
<dbReference type="PRO" id="PR:P53127"/>
<dbReference type="Proteomes" id="UP000002311">
    <property type="component" value="Chromosome VII"/>
</dbReference>
<dbReference type="RNAct" id="P53127">
    <property type="molecule type" value="protein"/>
</dbReference>
<dbReference type="GO" id="GO:0005737">
    <property type="term" value="C:cytoplasm"/>
    <property type="evidence" value="ECO:0007005"/>
    <property type="project" value="SGD"/>
</dbReference>
<dbReference type="GO" id="GO:0048189">
    <property type="term" value="C:Lid2 complex"/>
    <property type="evidence" value="ECO:0000318"/>
    <property type="project" value="GO_Central"/>
</dbReference>
<dbReference type="GO" id="GO:0005634">
    <property type="term" value="C:nucleus"/>
    <property type="evidence" value="ECO:0007005"/>
    <property type="project" value="SGD"/>
</dbReference>
<dbReference type="GO" id="GO:0070211">
    <property type="term" value="C:Snt2C complex"/>
    <property type="evidence" value="ECO:0000353"/>
    <property type="project" value="ComplexPortal"/>
</dbReference>
<dbReference type="GO" id="GO:0003682">
    <property type="term" value="F:chromatin binding"/>
    <property type="evidence" value="ECO:0007669"/>
    <property type="project" value="InterPro"/>
</dbReference>
<dbReference type="GO" id="GO:0061630">
    <property type="term" value="F:ubiquitin protein ligase activity"/>
    <property type="evidence" value="ECO:0000314"/>
    <property type="project" value="SGD"/>
</dbReference>
<dbReference type="GO" id="GO:0004842">
    <property type="term" value="F:ubiquitin-protein transferase activity"/>
    <property type="evidence" value="ECO:0000318"/>
    <property type="project" value="GO_Central"/>
</dbReference>
<dbReference type="GO" id="GO:0008270">
    <property type="term" value="F:zinc ion binding"/>
    <property type="evidence" value="ECO:0007669"/>
    <property type="project" value="UniProtKB-KW"/>
</dbReference>
<dbReference type="GO" id="GO:0034599">
    <property type="term" value="P:cellular response to oxidative stress"/>
    <property type="evidence" value="ECO:0000314"/>
    <property type="project" value="SGD"/>
</dbReference>
<dbReference type="GO" id="GO:0036205">
    <property type="term" value="P:histone catabolic process"/>
    <property type="evidence" value="ECO:0000315"/>
    <property type="project" value="SGD"/>
</dbReference>
<dbReference type="GO" id="GO:0006355">
    <property type="term" value="P:regulation of DNA-templated transcription"/>
    <property type="evidence" value="ECO:0000303"/>
    <property type="project" value="ComplexPortal"/>
</dbReference>
<dbReference type="GO" id="GO:0006357">
    <property type="term" value="P:regulation of transcription by RNA polymerase II"/>
    <property type="evidence" value="ECO:0000314"/>
    <property type="project" value="SGD"/>
</dbReference>
<dbReference type="GO" id="GO:0006979">
    <property type="term" value="P:response to oxidative stress"/>
    <property type="evidence" value="ECO:0000303"/>
    <property type="project" value="ComplexPortal"/>
</dbReference>
<dbReference type="CDD" id="cd04710">
    <property type="entry name" value="BAH_fungalPHD"/>
    <property type="match status" value="1"/>
</dbReference>
<dbReference type="CDD" id="cd15667">
    <property type="entry name" value="ePHD_Snt2p_like"/>
    <property type="match status" value="1"/>
</dbReference>
<dbReference type="CDD" id="cd15497">
    <property type="entry name" value="PHD1_Snt2p_like"/>
    <property type="match status" value="1"/>
</dbReference>
<dbReference type="CDD" id="cd15498">
    <property type="entry name" value="PHD2_Snt2p_like"/>
    <property type="match status" value="1"/>
</dbReference>
<dbReference type="FunFam" id="1.10.10.60:FF:000377">
    <property type="entry name" value="DNA-binding E3 ubiquitin-protein ligase"/>
    <property type="match status" value="1"/>
</dbReference>
<dbReference type="FunFam" id="3.30.40.10:FF:000742">
    <property type="entry name" value="DNA-binding E3 ubiquitin-protein ligase"/>
    <property type="match status" value="1"/>
</dbReference>
<dbReference type="FunFam" id="2.30.30.490:FF:000025">
    <property type="entry name" value="E3 ubiquitin-protein ligase SNT2"/>
    <property type="match status" value="1"/>
</dbReference>
<dbReference type="Gene3D" id="2.30.30.490">
    <property type="match status" value="1"/>
</dbReference>
<dbReference type="Gene3D" id="1.10.10.60">
    <property type="entry name" value="Homeodomain-like"/>
    <property type="match status" value="1"/>
</dbReference>
<dbReference type="Gene3D" id="3.30.40.10">
    <property type="entry name" value="Zinc/RING finger domain, C3HC4 (zinc finger)"/>
    <property type="match status" value="2"/>
</dbReference>
<dbReference type="InterPro" id="IPR001025">
    <property type="entry name" value="BAH_dom"/>
</dbReference>
<dbReference type="InterPro" id="IPR043151">
    <property type="entry name" value="BAH_sf"/>
</dbReference>
<dbReference type="InterPro" id="IPR034732">
    <property type="entry name" value="EPHD"/>
</dbReference>
<dbReference type="InterPro" id="IPR009057">
    <property type="entry name" value="Homeodomain-like_sf"/>
</dbReference>
<dbReference type="InterPro" id="IPR001005">
    <property type="entry name" value="SANT/Myb"/>
</dbReference>
<dbReference type="InterPro" id="IPR017884">
    <property type="entry name" value="SANT_dom"/>
</dbReference>
<dbReference type="InterPro" id="IPR029617">
    <property type="entry name" value="Snt2"/>
</dbReference>
<dbReference type="InterPro" id="IPR011011">
    <property type="entry name" value="Znf_FYVE_PHD"/>
</dbReference>
<dbReference type="InterPro" id="IPR001965">
    <property type="entry name" value="Znf_PHD"/>
</dbReference>
<dbReference type="InterPro" id="IPR019787">
    <property type="entry name" value="Znf_PHD-finger"/>
</dbReference>
<dbReference type="InterPro" id="IPR013083">
    <property type="entry name" value="Znf_RING/FYVE/PHD"/>
</dbReference>
<dbReference type="PANTHER" id="PTHR47672">
    <property type="entry name" value="E3 UBIQUITIN-PROTEIN LIGASE SNT2"/>
    <property type="match status" value="1"/>
</dbReference>
<dbReference type="PANTHER" id="PTHR47672:SF1">
    <property type="entry name" value="E3 UBIQUITIN-PROTEIN LIGASE SNT2"/>
    <property type="match status" value="1"/>
</dbReference>
<dbReference type="Pfam" id="PF01426">
    <property type="entry name" value="BAH"/>
    <property type="match status" value="1"/>
</dbReference>
<dbReference type="Pfam" id="PF00628">
    <property type="entry name" value="PHD"/>
    <property type="match status" value="2"/>
</dbReference>
<dbReference type="Pfam" id="PF13832">
    <property type="entry name" value="zf-HC5HC2H_2"/>
    <property type="match status" value="1"/>
</dbReference>
<dbReference type="SMART" id="SM00439">
    <property type="entry name" value="BAH"/>
    <property type="match status" value="1"/>
</dbReference>
<dbReference type="SMART" id="SM00249">
    <property type="entry name" value="PHD"/>
    <property type="match status" value="3"/>
</dbReference>
<dbReference type="SMART" id="SM00717">
    <property type="entry name" value="SANT"/>
    <property type="match status" value="1"/>
</dbReference>
<dbReference type="SUPFAM" id="SSF57903">
    <property type="entry name" value="FYVE/PHD zinc finger"/>
    <property type="match status" value="2"/>
</dbReference>
<dbReference type="SUPFAM" id="SSF46689">
    <property type="entry name" value="Homeodomain-like"/>
    <property type="match status" value="1"/>
</dbReference>
<dbReference type="PROSITE" id="PS51038">
    <property type="entry name" value="BAH"/>
    <property type="match status" value="1"/>
</dbReference>
<dbReference type="PROSITE" id="PS51805">
    <property type="entry name" value="EPHD"/>
    <property type="match status" value="1"/>
</dbReference>
<dbReference type="PROSITE" id="PS51293">
    <property type="entry name" value="SANT"/>
    <property type="match status" value="1"/>
</dbReference>
<dbReference type="PROSITE" id="PS01359">
    <property type="entry name" value="ZF_PHD_1"/>
    <property type="match status" value="1"/>
</dbReference>
<dbReference type="PROSITE" id="PS50016">
    <property type="entry name" value="ZF_PHD_2"/>
    <property type="match status" value="1"/>
</dbReference>
<accession>P53127</accession>
<accession>D6VU17</accession>
<protein>
    <recommendedName>
        <fullName evidence="15">E3 ubiquitin-protein ligase SNT2</fullName>
        <ecNumber evidence="10">2.3.2.27</ecNumber>
    </recommendedName>
    <alternativeName>
        <fullName evidence="13">Histone E3 ligase SNT2</fullName>
    </alternativeName>
    <alternativeName>
        <fullName evidence="14">RING-type E3 ubiquitin transferase SNT2</fullName>
    </alternativeName>
    <alternativeName>
        <fullName evidence="12">SANT domain-containing protein 2</fullName>
    </alternativeName>
</protein>
<reference key="1">
    <citation type="journal article" date="1997" name="Nature">
        <title>The nucleotide sequence of Saccharomyces cerevisiae chromosome VII.</title>
        <authorList>
            <person name="Tettelin H."/>
            <person name="Agostoni-Carbone M.L."/>
            <person name="Albermann K."/>
            <person name="Albers M."/>
            <person name="Arroyo J."/>
            <person name="Backes U."/>
            <person name="Barreiros T."/>
            <person name="Bertani I."/>
            <person name="Bjourson A.J."/>
            <person name="Brueckner M."/>
            <person name="Bruschi C.V."/>
            <person name="Carignani G."/>
            <person name="Castagnoli L."/>
            <person name="Cerdan E."/>
            <person name="Clemente M.L."/>
            <person name="Coblenz A."/>
            <person name="Coglievina M."/>
            <person name="Coissac E."/>
            <person name="Defoor E."/>
            <person name="Del Bino S."/>
            <person name="Delius H."/>
            <person name="Delneri D."/>
            <person name="de Wergifosse P."/>
            <person name="Dujon B."/>
            <person name="Durand P."/>
            <person name="Entian K.-D."/>
            <person name="Eraso P."/>
            <person name="Escribano V."/>
            <person name="Fabiani L."/>
            <person name="Fartmann B."/>
            <person name="Feroli F."/>
            <person name="Feuermann M."/>
            <person name="Frontali L."/>
            <person name="Garcia-Gonzalez M."/>
            <person name="Garcia-Saez M.I."/>
            <person name="Goffeau A."/>
            <person name="Guerreiro P."/>
            <person name="Hani J."/>
            <person name="Hansen M."/>
            <person name="Hebling U."/>
            <person name="Hernandez K."/>
            <person name="Heumann K."/>
            <person name="Hilger F."/>
            <person name="Hofmann B."/>
            <person name="Indge K.J."/>
            <person name="James C.M."/>
            <person name="Klima R."/>
            <person name="Koetter P."/>
            <person name="Kramer B."/>
            <person name="Kramer W."/>
            <person name="Lauquin G."/>
            <person name="Leuther H."/>
            <person name="Louis E.J."/>
            <person name="Maillier E."/>
            <person name="Marconi A."/>
            <person name="Martegani E."/>
            <person name="Mazon M.J."/>
            <person name="Mazzoni C."/>
            <person name="McReynolds A.D.K."/>
            <person name="Melchioretto P."/>
            <person name="Mewes H.-W."/>
            <person name="Minenkova O."/>
            <person name="Mueller-Auer S."/>
            <person name="Nawrocki A."/>
            <person name="Netter P."/>
            <person name="Neu R."/>
            <person name="Nombela C."/>
            <person name="Oliver S.G."/>
            <person name="Panzeri L."/>
            <person name="Paoluzi S."/>
            <person name="Plevani P."/>
            <person name="Portetelle D."/>
            <person name="Portillo F."/>
            <person name="Potier S."/>
            <person name="Purnelle B."/>
            <person name="Rieger M."/>
            <person name="Riles L."/>
            <person name="Rinaldi T."/>
            <person name="Robben J."/>
            <person name="Rodrigues-Pousada C."/>
            <person name="Rodriguez-Belmonte E."/>
            <person name="Rodriguez-Torres A.M."/>
            <person name="Rose M."/>
            <person name="Ruzzi M."/>
            <person name="Saliola M."/>
            <person name="Sanchez-Perez M."/>
            <person name="Schaefer B."/>
            <person name="Schaefer M."/>
            <person name="Scharfe M."/>
            <person name="Schmidheini T."/>
            <person name="Schreer A."/>
            <person name="Skala J."/>
            <person name="Souciet J.-L."/>
            <person name="Steensma H.Y."/>
            <person name="Talla E."/>
            <person name="Thierry A."/>
            <person name="Vandenbol M."/>
            <person name="van der Aart Q.J.M."/>
            <person name="Van Dyck L."/>
            <person name="Vanoni M."/>
            <person name="Verhasselt P."/>
            <person name="Voet M."/>
            <person name="Volckaert G."/>
            <person name="Wambutt R."/>
            <person name="Watson M.D."/>
            <person name="Weber N."/>
            <person name="Wedler E."/>
            <person name="Wedler H."/>
            <person name="Wipfli P."/>
            <person name="Wolf K."/>
            <person name="Wright L.F."/>
            <person name="Zaccaria P."/>
            <person name="Zimmermann M."/>
            <person name="Zollner A."/>
            <person name="Kleine K."/>
        </authorList>
    </citation>
    <scope>NUCLEOTIDE SEQUENCE [LARGE SCALE GENOMIC DNA]</scope>
    <source>
        <strain>ATCC 204508 / S288c</strain>
    </source>
</reference>
<reference key="2">
    <citation type="journal article" date="2014" name="G3 (Bethesda)">
        <title>The reference genome sequence of Saccharomyces cerevisiae: Then and now.</title>
        <authorList>
            <person name="Engel S.R."/>
            <person name="Dietrich F.S."/>
            <person name="Fisk D.G."/>
            <person name="Binkley G."/>
            <person name="Balakrishnan R."/>
            <person name="Costanzo M.C."/>
            <person name="Dwight S.S."/>
            <person name="Hitz B.C."/>
            <person name="Karra K."/>
            <person name="Nash R.S."/>
            <person name="Weng S."/>
            <person name="Wong E.D."/>
            <person name="Lloyd P."/>
            <person name="Skrzypek M.S."/>
            <person name="Miyasato S.R."/>
            <person name="Simison M."/>
            <person name="Cherry J.M."/>
        </authorList>
    </citation>
    <scope>GENOME REANNOTATION</scope>
    <source>
        <strain>ATCC 204508 / S288c</strain>
    </source>
</reference>
<reference key="3">
    <citation type="journal article" date="1996" name="Yeast">
        <title>Sequence analysis of a 14.6 kb DNA fragment of Saccharomyces cerevisiae chromosome VII reveals SEC27, SSM1b, a putative S-adenosylmethionine-dependent enzyme and six new open reading frames.</title>
        <authorList>
            <person name="Escribano V."/>
            <person name="Eraso P."/>
            <person name="Portillo F."/>
            <person name="Mazon M.J."/>
        </authorList>
    </citation>
    <scope>NUCLEOTIDE SEQUENCE [GENOMIC DNA] OF 1-1232</scope>
    <source>
        <strain>ATCC 96604 / S288c / FY1679</strain>
    </source>
</reference>
<reference key="4">
    <citation type="journal article" date="2003" name="Nature">
        <title>Global analysis of protein localization in budding yeast.</title>
        <authorList>
            <person name="Huh W.-K."/>
            <person name="Falvo J.V."/>
            <person name="Gerke L.C."/>
            <person name="Carroll A.S."/>
            <person name="Howson R.W."/>
            <person name="Weissman J.S."/>
            <person name="O'Shea E.K."/>
        </authorList>
    </citation>
    <scope>SUBCELLULAR LOCATION [LARGE SCALE ANALYSIS]</scope>
</reference>
<reference key="5">
    <citation type="journal article" date="2007" name="J. Biol. Chem.">
        <title>Proteome-wide analysis in Saccharomyces cerevisiae identifies several PHD fingers as novel direct and selective binding modules of histone H3 methylated at either lysine 4 or lysine 36.</title>
        <authorList>
            <person name="Shi X."/>
            <person name="Kachirskaia I."/>
            <person name="Walter K.L."/>
            <person name="Kuo J.-H.A."/>
            <person name="Lake A."/>
            <person name="Davrazou F."/>
            <person name="Chan S.M."/>
            <person name="Martin D.G.E."/>
            <person name="Fingerman I.M."/>
            <person name="Briggs S.D."/>
            <person name="Howe L."/>
            <person name="Utz P.J."/>
            <person name="Kutateladze T.G."/>
            <person name="Lugovskoy A.A."/>
            <person name="Bedford M.T."/>
            <person name="Gozani O."/>
        </authorList>
    </citation>
    <scope>INTERACTION WITH HISTONE H3</scope>
</reference>
<reference key="6">
    <citation type="journal article" date="2008" name="Genome Biol.">
        <title>Chromatin Central: towards the comparative proteome by accurate mapping of the yeast proteomic environment.</title>
        <authorList>
            <person name="Shevchenko A."/>
            <person name="Roguev A."/>
            <person name="Schaft D."/>
            <person name="Buchanan L."/>
            <person name="Habermann B."/>
            <person name="Sakalar C."/>
            <person name="Thomas H."/>
            <person name="Krogan N.J."/>
            <person name="Shevchenko A."/>
            <person name="Stewart A.F."/>
        </authorList>
    </citation>
    <scope>INTERACTION WITH ECM5 AND RPD3</scope>
</reference>
<reference key="7">
    <citation type="journal article" date="2009" name="Science">
        <title>Global analysis of Cdk1 substrate phosphorylation sites provides insights into evolution.</title>
        <authorList>
            <person name="Holt L.J."/>
            <person name="Tuch B.B."/>
            <person name="Villen J."/>
            <person name="Johnson A.D."/>
            <person name="Gygi S.P."/>
            <person name="Morgan D.O."/>
        </authorList>
    </citation>
    <scope>IDENTIFICATION BY MASS SPECTROMETRY [LARGE SCALE ANALYSIS]</scope>
</reference>
<reference key="8">
    <citation type="journal article" date="2012" name="PLoS ONE">
        <title>Novel E3 ubiquitin ligases that regulate histone protein levels in the budding yeast Saccharomyces cerevisiae.</title>
        <authorList>
            <person name="Singh R.K."/>
            <person name="Gonzalez M."/>
            <person name="Kabbaj M.H."/>
            <person name="Gunjan A."/>
        </authorList>
    </citation>
    <scope>FUNCTION</scope>
    <scope>CATALYTIC ACTIVITY</scope>
    <scope>INTERACTION WITH UBC4</scope>
    <scope>INTERACTION WITH HISTONES H3 AND H4</scope>
</reference>
<reference key="9">
    <citation type="journal article" date="2013" name="Mol. Cell. Biol.">
        <title>The yeast Snt2 protein coordinates the transcriptional response to hydrogen peroxide-mediated oxidative stress.</title>
        <authorList>
            <person name="Baker L.A."/>
            <person name="Ueberheide B.M."/>
            <person name="Dewell S."/>
            <person name="Chait B.T."/>
            <person name="Zheng D."/>
            <person name="Allis C.D."/>
        </authorList>
    </citation>
    <scope>FUNCTION</scope>
    <scope>SUBCELLULAR LOCATION</scope>
    <scope>INTERACTION WITH ECM5 AND RPD3</scope>
</reference>
<feature type="chain" id="PRO_0000202742" description="E3 ubiquitin-protein ligase SNT2">
    <location>
        <begin position="1"/>
        <end position="1403"/>
    </location>
</feature>
<feature type="domain" description="BAH" evidence="3">
    <location>
        <begin position="121"/>
        <end position="258"/>
    </location>
</feature>
<feature type="domain" description="SANT" evidence="4">
    <location>
        <begin position="555"/>
        <end position="606"/>
    </location>
</feature>
<feature type="zinc finger region" description="PHD-type 1" evidence="1">
    <location>
        <begin position="317"/>
        <end position="369"/>
    </location>
</feature>
<feature type="zinc finger region" description="PHD-type 2" evidence="1">
    <location>
        <begin position="1038"/>
        <end position="1097"/>
    </location>
</feature>
<feature type="zinc finger region" description="RING-type; degenerate" evidence="2">
    <location>
        <begin position="1041"/>
        <end position="1095"/>
    </location>
</feature>
<feature type="zinc finger region" description="C2HC pre-PHD-type" evidence="5">
    <location>
        <begin position="1105"/>
        <end position="1153"/>
    </location>
</feature>
<feature type="zinc finger region" description="PHD-type 3; degenerate" evidence="5">
    <location>
        <begin position="1177"/>
        <end position="1231"/>
    </location>
</feature>
<feature type="region of interest" description="Disordered" evidence="6">
    <location>
        <begin position="40"/>
        <end position="62"/>
    </location>
</feature>
<feature type="compositionally biased region" description="Polar residues" evidence="6">
    <location>
        <begin position="45"/>
        <end position="62"/>
    </location>
</feature>
<evidence type="ECO:0000255" key="1">
    <source>
        <dbReference type="PROSITE-ProRule" id="PRU00146"/>
    </source>
</evidence>
<evidence type="ECO:0000255" key="2">
    <source>
        <dbReference type="PROSITE-ProRule" id="PRU00175"/>
    </source>
</evidence>
<evidence type="ECO:0000255" key="3">
    <source>
        <dbReference type="PROSITE-ProRule" id="PRU00370"/>
    </source>
</evidence>
<evidence type="ECO:0000255" key="4">
    <source>
        <dbReference type="PROSITE-ProRule" id="PRU00624"/>
    </source>
</evidence>
<evidence type="ECO:0000255" key="5">
    <source>
        <dbReference type="PROSITE-ProRule" id="PRU01146"/>
    </source>
</evidence>
<evidence type="ECO:0000256" key="6">
    <source>
        <dbReference type="SAM" id="MobiDB-lite"/>
    </source>
</evidence>
<evidence type="ECO:0000269" key="7">
    <source>
    </source>
</evidence>
<evidence type="ECO:0000269" key="8">
    <source>
    </source>
</evidence>
<evidence type="ECO:0000269" key="9">
    <source>
    </source>
</evidence>
<evidence type="ECO:0000269" key="10">
    <source>
    </source>
</evidence>
<evidence type="ECO:0000269" key="11">
    <source>
    </source>
</evidence>
<evidence type="ECO:0000303" key="12">
    <source>
    </source>
</evidence>
<evidence type="ECO:0000303" key="13">
    <source>
    </source>
</evidence>
<evidence type="ECO:0000305" key="14"/>
<evidence type="ECO:0000305" key="15">
    <source>
    </source>
</evidence>
<evidence type="ECO:0000312" key="16">
    <source>
        <dbReference type="SGD" id="S000003099"/>
    </source>
</evidence>
<keyword id="KW-0963">Cytoplasm</keyword>
<keyword id="KW-0479">Metal-binding</keyword>
<keyword id="KW-0539">Nucleus</keyword>
<keyword id="KW-1185">Reference proteome</keyword>
<keyword id="KW-0677">Repeat</keyword>
<keyword id="KW-0804">Transcription</keyword>
<keyword id="KW-0805">Transcription regulation</keyword>
<keyword id="KW-0808">Transferase</keyword>
<keyword id="KW-0833">Ubl conjugation pathway</keyword>
<keyword id="KW-0862">Zinc</keyword>
<keyword id="KW-0863">Zinc-finger</keyword>
<name>SNT2_YEAST</name>